<proteinExistence type="inferred from homology"/>
<sequence length="102" mass="11791">MKIVVLGDKDTVLGFRLAGVHETYSFEDTTHEIERVRNKIMELIEREDVGVILITERLAQRVEIPDVAFPIILQIPDKYGSLYGEEQLREIVRRAIGVEIKR</sequence>
<organism>
    <name type="scientific">Thermococcus sibiricus (strain DSM 12597 / MM 739)</name>
    <dbReference type="NCBI Taxonomy" id="604354"/>
    <lineage>
        <taxon>Archaea</taxon>
        <taxon>Methanobacteriati</taxon>
        <taxon>Methanobacteriota</taxon>
        <taxon>Thermococci</taxon>
        <taxon>Thermococcales</taxon>
        <taxon>Thermococcaceae</taxon>
        <taxon>Thermococcus</taxon>
    </lineage>
</organism>
<evidence type="ECO:0000255" key="1">
    <source>
        <dbReference type="HAMAP-Rule" id="MF_00312"/>
    </source>
</evidence>
<protein>
    <recommendedName>
        <fullName evidence="1">A-type ATP synthase subunit F</fullName>
    </recommendedName>
</protein>
<feature type="chain" id="PRO_1000205060" description="A-type ATP synthase subunit F">
    <location>
        <begin position="1"/>
        <end position="102"/>
    </location>
</feature>
<keyword id="KW-0066">ATP synthesis</keyword>
<keyword id="KW-1003">Cell membrane</keyword>
<keyword id="KW-0375">Hydrogen ion transport</keyword>
<keyword id="KW-0406">Ion transport</keyword>
<keyword id="KW-0472">Membrane</keyword>
<keyword id="KW-1185">Reference proteome</keyword>
<keyword id="KW-0813">Transport</keyword>
<gene>
    <name evidence="1" type="primary">atpF</name>
    <name type="ordered locus">TSIB_1793</name>
</gene>
<dbReference type="EMBL" id="CP001463">
    <property type="protein sequence ID" value="ACS90844.1"/>
    <property type="molecule type" value="Genomic_DNA"/>
</dbReference>
<dbReference type="RefSeq" id="WP_015850060.1">
    <property type="nucleotide sequence ID" value="NC_012883.1"/>
</dbReference>
<dbReference type="SMR" id="C6A5E9"/>
<dbReference type="STRING" id="604354.TSIB_1793"/>
<dbReference type="GeneID" id="8096803"/>
<dbReference type="KEGG" id="tsi:TSIB_1793"/>
<dbReference type="eggNOG" id="arCOG04102">
    <property type="taxonomic scope" value="Archaea"/>
</dbReference>
<dbReference type="HOGENOM" id="CLU_135754_2_0_2"/>
<dbReference type="OrthoDB" id="24971at2157"/>
<dbReference type="Proteomes" id="UP000009079">
    <property type="component" value="Chromosome"/>
</dbReference>
<dbReference type="GO" id="GO:0005886">
    <property type="term" value="C:plasma membrane"/>
    <property type="evidence" value="ECO:0007669"/>
    <property type="project" value="UniProtKB-SubCell"/>
</dbReference>
<dbReference type="GO" id="GO:0005524">
    <property type="term" value="F:ATP binding"/>
    <property type="evidence" value="ECO:0007669"/>
    <property type="project" value="UniProtKB-UniRule"/>
</dbReference>
<dbReference type="GO" id="GO:0046933">
    <property type="term" value="F:proton-transporting ATP synthase activity, rotational mechanism"/>
    <property type="evidence" value="ECO:0007669"/>
    <property type="project" value="UniProtKB-UniRule"/>
</dbReference>
<dbReference type="GO" id="GO:0046961">
    <property type="term" value="F:proton-transporting ATPase activity, rotational mechanism"/>
    <property type="evidence" value="ECO:0007669"/>
    <property type="project" value="InterPro"/>
</dbReference>
<dbReference type="GO" id="GO:0042777">
    <property type="term" value="P:proton motive force-driven plasma membrane ATP synthesis"/>
    <property type="evidence" value="ECO:0007669"/>
    <property type="project" value="UniProtKB-UniRule"/>
</dbReference>
<dbReference type="Gene3D" id="3.40.50.10580">
    <property type="entry name" value="ATPase, V1 complex, subunit F"/>
    <property type="match status" value="1"/>
</dbReference>
<dbReference type="HAMAP" id="MF_00312">
    <property type="entry name" value="ATP_synth_F_arch"/>
    <property type="match status" value="1"/>
</dbReference>
<dbReference type="InterPro" id="IPR008218">
    <property type="entry name" value="ATPase_V1-cplx_f_g_su"/>
</dbReference>
<dbReference type="InterPro" id="IPR022944">
    <property type="entry name" value="ATPase_V1-cplx_fsu_bac/arc"/>
</dbReference>
<dbReference type="InterPro" id="IPR036906">
    <property type="entry name" value="ATPase_V1_fsu_sf"/>
</dbReference>
<dbReference type="NCBIfam" id="NF003047">
    <property type="entry name" value="PRK03957.1"/>
    <property type="match status" value="1"/>
</dbReference>
<dbReference type="PANTHER" id="PTHR13861:SF2">
    <property type="entry name" value="V-TYPE PROTON ATPASE SUBUNIT F"/>
    <property type="match status" value="1"/>
</dbReference>
<dbReference type="PANTHER" id="PTHR13861">
    <property type="entry name" value="VACUOLAR ATP SYNTHASE SUBUNIT F"/>
    <property type="match status" value="1"/>
</dbReference>
<dbReference type="Pfam" id="PF01990">
    <property type="entry name" value="ATP-synt_F"/>
    <property type="match status" value="1"/>
</dbReference>
<dbReference type="SUPFAM" id="SSF159468">
    <property type="entry name" value="AtpF-like"/>
    <property type="match status" value="1"/>
</dbReference>
<accession>C6A5E9</accession>
<comment type="function">
    <text evidence="1">Component of the A-type ATP synthase that produces ATP from ADP in the presence of a proton gradient across the membrane.</text>
</comment>
<comment type="subunit">
    <text evidence="1">Has multiple subunits with at least A(3), B(3), C, D, E, F, H, I and proteolipid K(x).</text>
</comment>
<comment type="subcellular location">
    <subcellularLocation>
        <location evidence="1">Cell membrane</location>
        <topology evidence="1">Peripheral membrane protein</topology>
    </subcellularLocation>
</comment>
<comment type="similarity">
    <text evidence="1">Belongs to the V-ATPase F subunit family.</text>
</comment>
<reference key="1">
    <citation type="journal article" date="2009" name="Appl. Environ. Microbiol.">
        <title>Metabolic versatility and indigenous origin of the archaeon Thermococcus sibiricus, isolated from a siberian oil reservoir, as revealed by genome analysis.</title>
        <authorList>
            <person name="Mardanov A.V."/>
            <person name="Ravin N.V."/>
            <person name="Svetlitchnyi V.A."/>
            <person name="Beletsky A.V."/>
            <person name="Miroshnichenko M.L."/>
            <person name="Bonch-Osmolovskaya E.A."/>
            <person name="Skryabin K.G."/>
        </authorList>
    </citation>
    <scope>NUCLEOTIDE SEQUENCE [LARGE SCALE GENOMIC DNA]</scope>
    <source>
        <strain>DSM 12597 / MM 739</strain>
    </source>
</reference>
<name>AATF_THESM</name>